<keyword id="KW-0067">ATP-binding</keyword>
<keyword id="KW-0436">Ligase</keyword>
<keyword id="KW-0460">Magnesium</keyword>
<keyword id="KW-0479">Metal-binding</keyword>
<keyword id="KW-0547">Nucleotide-binding</keyword>
<keyword id="KW-0658">Purine biosynthesis</keyword>
<keyword id="KW-1185">Reference proteome</keyword>
<name>PURT_ERWT9</name>
<proteinExistence type="inferred from homology"/>
<organism>
    <name type="scientific">Erwinia tasmaniensis (strain DSM 17950 / CFBP 7177 / CIP 109463 / NCPPB 4357 / Et1/99)</name>
    <dbReference type="NCBI Taxonomy" id="465817"/>
    <lineage>
        <taxon>Bacteria</taxon>
        <taxon>Pseudomonadati</taxon>
        <taxon>Pseudomonadota</taxon>
        <taxon>Gammaproteobacteria</taxon>
        <taxon>Enterobacterales</taxon>
        <taxon>Erwiniaceae</taxon>
        <taxon>Erwinia</taxon>
    </lineage>
</organism>
<protein>
    <recommendedName>
        <fullName evidence="1">Formate-dependent phosphoribosylglycinamide formyltransferase</fullName>
        <ecNumber evidence="1">6.3.1.21</ecNumber>
    </recommendedName>
    <alternativeName>
        <fullName evidence="1">5'-phosphoribosylglycinamide transformylase 2</fullName>
    </alternativeName>
    <alternativeName>
        <fullName evidence="1">Formate-dependent GAR transformylase</fullName>
    </alternativeName>
    <alternativeName>
        <fullName evidence="1">GAR transformylase 2</fullName>
        <shortName evidence="1">GART 2</shortName>
    </alternativeName>
    <alternativeName>
        <fullName evidence="1">Non-folate glycinamide ribonucleotide transformylase</fullName>
    </alternativeName>
    <alternativeName>
        <fullName evidence="1">Phosphoribosylglycinamide formyltransferase 2</fullName>
    </alternativeName>
</protein>
<reference key="1">
    <citation type="journal article" date="2008" name="Environ. Microbiol.">
        <title>The genome of Erwinia tasmaniensis strain Et1/99, a non-pathogenic bacterium in the genus Erwinia.</title>
        <authorList>
            <person name="Kube M."/>
            <person name="Migdoll A.M."/>
            <person name="Mueller I."/>
            <person name="Kuhl H."/>
            <person name="Beck A."/>
            <person name="Reinhardt R."/>
            <person name="Geider K."/>
        </authorList>
    </citation>
    <scope>NUCLEOTIDE SEQUENCE [LARGE SCALE GENOMIC DNA]</scope>
    <source>
        <strain>DSM 17950 / CFBP 7177 / CIP 109463 / NCPPB 4357 / Et1/99</strain>
    </source>
</reference>
<gene>
    <name evidence="1" type="primary">purT</name>
    <name type="ordered locus">ETA_14990</name>
</gene>
<evidence type="ECO:0000255" key="1">
    <source>
        <dbReference type="HAMAP-Rule" id="MF_01643"/>
    </source>
</evidence>
<sequence>MTTVGTALRPNATRVMLLGSGELGKEVALECQRLGVEVIAVDRYADAPAMQVAHRSHVIDMLDGAALAALIADEKPDFVVPEIEAIATDMLVELEKQGQHVVPTARAAKLTMDREGIRRLAAEELWVPTSDYRFADGYDAFQAAAEAIGFPCIVKPVMSSSGKGQSFIREASQLMAAWEYAQQGGRAGAGRVIVEGVVKFDFEITLLTISAVDGIHFCAPIGHRQEDGDYRESWQPQHMSELALQRARQVAEKVVTALGGHGLFGVELFVCGDEVVFSEVSPRPHDTGMVTLISQDVSEFALHVRAFLGLPVGAIRQYGPAASAVILPELDSDNVQYANLSAAVGAGLQLRLFGKPHIQGKRRLGVALATGLDIDEAVQRAVSAANGVKVSG</sequence>
<feature type="chain" id="PRO_1000186881" description="Formate-dependent phosphoribosylglycinamide formyltransferase">
    <location>
        <begin position="1"/>
        <end position="392"/>
    </location>
</feature>
<feature type="domain" description="ATP-grasp" evidence="1">
    <location>
        <begin position="119"/>
        <end position="308"/>
    </location>
</feature>
<feature type="binding site" evidence="1">
    <location>
        <begin position="22"/>
        <end position="23"/>
    </location>
    <ligand>
        <name>N(1)-(5-phospho-beta-D-ribosyl)glycinamide</name>
        <dbReference type="ChEBI" id="CHEBI:143788"/>
    </ligand>
</feature>
<feature type="binding site" evidence="1">
    <location>
        <position position="82"/>
    </location>
    <ligand>
        <name>N(1)-(5-phospho-beta-D-ribosyl)glycinamide</name>
        <dbReference type="ChEBI" id="CHEBI:143788"/>
    </ligand>
</feature>
<feature type="binding site" evidence="1">
    <location>
        <position position="114"/>
    </location>
    <ligand>
        <name>ATP</name>
        <dbReference type="ChEBI" id="CHEBI:30616"/>
    </ligand>
</feature>
<feature type="binding site" evidence="1">
    <location>
        <position position="155"/>
    </location>
    <ligand>
        <name>ATP</name>
        <dbReference type="ChEBI" id="CHEBI:30616"/>
    </ligand>
</feature>
<feature type="binding site" evidence="1">
    <location>
        <begin position="160"/>
        <end position="165"/>
    </location>
    <ligand>
        <name>ATP</name>
        <dbReference type="ChEBI" id="CHEBI:30616"/>
    </ligand>
</feature>
<feature type="binding site" evidence="1">
    <location>
        <begin position="195"/>
        <end position="198"/>
    </location>
    <ligand>
        <name>ATP</name>
        <dbReference type="ChEBI" id="CHEBI:30616"/>
    </ligand>
</feature>
<feature type="binding site" evidence="1">
    <location>
        <position position="203"/>
    </location>
    <ligand>
        <name>ATP</name>
        <dbReference type="ChEBI" id="CHEBI:30616"/>
    </ligand>
</feature>
<feature type="binding site" evidence="1">
    <location>
        <position position="267"/>
    </location>
    <ligand>
        <name>Mg(2+)</name>
        <dbReference type="ChEBI" id="CHEBI:18420"/>
    </ligand>
</feature>
<feature type="binding site" evidence="1">
    <location>
        <position position="279"/>
    </location>
    <ligand>
        <name>Mg(2+)</name>
        <dbReference type="ChEBI" id="CHEBI:18420"/>
    </ligand>
</feature>
<feature type="binding site" evidence="1">
    <location>
        <position position="286"/>
    </location>
    <ligand>
        <name>N(1)-(5-phospho-beta-D-ribosyl)glycinamide</name>
        <dbReference type="ChEBI" id="CHEBI:143788"/>
    </ligand>
</feature>
<feature type="binding site" evidence="1">
    <location>
        <position position="355"/>
    </location>
    <ligand>
        <name>N(1)-(5-phospho-beta-D-ribosyl)glycinamide</name>
        <dbReference type="ChEBI" id="CHEBI:143788"/>
    </ligand>
</feature>
<feature type="binding site" evidence="1">
    <location>
        <begin position="362"/>
        <end position="363"/>
    </location>
    <ligand>
        <name>N(1)-(5-phospho-beta-D-ribosyl)glycinamide</name>
        <dbReference type="ChEBI" id="CHEBI:143788"/>
    </ligand>
</feature>
<dbReference type="EC" id="6.3.1.21" evidence="1"/>
<dbReference type="EMBL" id="CU468135">
    <property type="protein sequence ID" value="CAO96545.1"/>
    <property type="molecule type" value="Genomic_DNA"/>
</dbReference>
<dbReference type="RefSeq" id="WP_012441239.1">
    <property type="nucleotide sequence ID" value="NC_010694.1"/>
</dbReference>
<dbReference type="SMR" id="B2VJA4"/>
<dbReference type="STRING" id="465817.ETA_14990"/>
<dbReference type="KEGG" id="eta:ETA_14990"/>
<dbReference type="eggNOG" id="COG0027">
    <property type="taxonomic scope" value="Bacteria"/>
</dbReference>
<dbReference type="HOGENOM" id="CLU_011534_1_3_6"/>
<dbReference type="OrthoDB" id="9804625at2"/>
<dbReference type="UniPathway" id="UPA00074">
    <property type="reaction ID" value="UER00127"/>
</dbReference>
<dbReference type="Proteomes" id="UP000001726">
    <property type="component" value="Chromosome"/>
</dbReference>
<dbReference type="GO" id="GO:0005829">
    <property type="term" value="C:cytosol"/>
    <property type="evidence" value="ECO:0007669"/>
    <property type="project" value="TreeGrafter"/>
</dbReference>
<dbReference type="GO" id="GO:0005524">
    <property type="term" value="F:ATP binding"/>
    <property type="evidence" value="ECO:0007669"/>
    <property type="project" value="UniProtKB-UniRule"/>
</dbReference>
<dbReference type="GO" id="GO:0000287">
    <property type="term" value="F:magnesium ion binding"/>
    <property type="evidence" value="ECO:0007669"/>
    <property type="project" value="InterPro"/>
</dbReference>
<dbReference type="GO" id="GO:0043815">
    <property type="term" value="F:phosphoribosylglycinamide formyltransferase 2 activity"/>
    <property type="evidence" value="ECO:0007669"/>
    <property type="project" value="UniProtKB-UniRule"/>
</dbReference>
<dbReference type="GO" id="GO:0004644">
    <property type="term" value="F:phosphoribosylglycinamide formyltransferase activity"/>
    <property type="evidence" value="ECO:0007669"/>
    <property type="project" value="InterPro"/>
</dbReference>
<dbReference type="GO" id="GO:0006189">
    <property type="term" value="P:'de novo' IMP biosynthetic process"/>
    <property type="evidence" value="ECO:0007669"/>
    <property type="project" value="UniProtKB-UniRule"/>
</dbReference>
<dbReference type="FunFam" id="3.30.1490.20:FF:000013">
    <property type="entry name" value="Formate-dependent phosphoribosylglycinamide formyltransferase"/>
    <property type="match status" value="1"/>
</dbReference>
<dbReference type="FunFam" id="3.30.470.20:FF:000027">
    <property type="entry name" value="Formate-dependent phosphoribosylglycinamide formyltransferase"/>
    <property type="match status" value="1"/>
</dbReference>
<dbReference type="FunFam" id="3.40.50.20:FF:000007">
    <property type="entry name" value="Formate-dependent phosphoribosylglycinamide formyltransferase"/>
    <property type="match status" value="1"/>
</dbReference>
<dbReference type="Gene3D" id="3.40.50.20">
    <property type="match status" value="1"/>
</dbReference>
<dbReference type="Gene3D" id="3.30.1490.20">
    <property type="entry name" value="ATP-grasp fold, A domain"/>
    <property type="match status" value="1"/>
</dbReference>
<dbReference type="Gene3D" id="3.30.470.20">
    <property type="entry name" value="ATP-grasp fold, B domain"/>
    <property type="match status" value="1"/>
</dbReference>
<dbReference type="HAMAP" id="MF_01643">
    <property type="entry name" value="PurT"/>
    <property type="match status" value="1"/>
</dbReference>
<dbReference type="InterPro" id="IPR011761">
    <property type="entry name" value="ATP-grasp"/>
</dbReference>
<dbReference type="InterPro" id="IPR003135">
    <property type="entry name" value="ATP-grasp_carboxylate-amine"/>
</dbReference>
<dbReference type="InterPro" id="IPR013815">
    <property type="entry name" value="ATP_grasp_subdomain_1"/>
</dbReference>
<dbReference type="InterPro" id="IPR016185">
    <property type="entry name" value="PreATP-grasp_dom_sf"/>
</dbReference>
<dbReference type="InterPro" id="IPR005862">
    <property type="entry name" value="PurT"/>
</dbReference>
<dbReference type="InterPro" id="IPR054350">
    <property type="entry name" value="PurT/PurK_preATP-grasp"/>
</dbReference>
<dbReference type="InterPro" id="IPR048740">
    <property type="entry name" value="PurT_C"/>
</dbReference>
<dbReference type="InterPro" id="IPR011054">
    <property type="entry name" value="Rudment_hybrid_motif"/>
</dbReference>
<dbReference type="NCBIfam" id="NF006766">
    <property type="entry name" value="PRK09288.1"/>
    <property type="match status" value="1"/>
</dbReference>
<dbReference type="NCBIfam" id="TIGR01142">
    <property type="entry name" value="purT"/>
    <property type="match status" value="1"/>
</dbReference>
<dbReference type="PANTHER" id="PTHR43055">
    <property type="entry name" value="FORMATE-DEPENDENT PHOSPHORIBOSYLGLYCINAMIDE FORMYLTRANSFERASE"/>
    <property type="match status" value="1"/>
</dbReference>
<dbReference type="PANTHER" id="PTHR43055:SF1">
    <property type="entry name" value="FORMATE-DEPENDENT PHOSPHORIBOSYLGLYCINAMIDE FORMYLTRANSFERASE"/>
    <property type="match status" value="1"/>
</dbReference>
<dbReference type="Pfam" id="PF02222">
    <property type="entry name" value="ATP-grasp"/>
    <property type="match status" value="1"/>
</dbReference>
<dbReference type="Pfam" id="PF21244">
    <property type="entry name" value="PurT_C"/>
    <property type="match status" value="1"/>
</dbReference>
<dbReference type="Pfam" id="PF22660">
    <property type="entry name" value="RS_preATP-grasp-like"/>
    <property type="match status" value="1"/>
</dbReference>
<dbReference type="SUPFAM" id="SSF56059">
    <property type="entry name" value="Glutathione synthetase ATP-binding domain-like"/>
    <property type="match status" value="1"/>
</dbReference>
<dbReference type="SUPFAM" id="SSF52440">
    <property type="entry name" value="PreATP-grasp domain"/>
    <property type="match status" value="1"/>
</dbReference>
<dbReference type="SUPFAM" id="SSF51246">
    <property type="entry name" value="Rudiment single hybrid motif"/>
    <property type="match status" value="1"/>
</dbReference>
<dbReference type="PROSITE" id="PS50975">
    <property type="entry name" value="ATP_GRASP"/>
    <property type="match status" value="1"/>
</dbReference>
<comment type="function">
    <text evidence="1">Involved in the de novo purine biosynthesis. Catalyzes the transfer of formate to 5-phospho-ribosyl-glycinamide (GAR), producing 5-phospho-ribosyl-N-formylglycinamide (FGAR). Formate is provided by PurU via hydrolysis of 10-formyl-tetrahydrofolate.</text>
</comment>
<comment type="catalytic activity">
    <reaction evidence="1">
        <text>N(1)-(5-phospho-beta-D-ribosyl)glycinamide + formate + ATP = N(2)-formyl-N(1)-(5-phospho-beta-D-ribosyl)glycinamide + ADP + phosphate + H(+)</text>
        <dbReference type="Rhea" id="RHEA:24829"/>
        <dbReference type="ChEBI" id="CHEBI:15378"/>
        <dbReference type="ChEBI" id="CHEBI:15740"/>
        <dbReference type="ChEBI" id="CHEBI:30616"/>
        <dbReference type="ChEBI" id="CHEBI:43474"/>
        <dbReference type="ChEBI" id="CHEBI:143788"/>
        <dbReference type="ChEBI" id="CHEBI:147286"/>
        <dbReference type="ChEBI" id="CHEBI:456216"/>
        <dbReference type="EC" id="6.3.1.21"/>
    </reaction>
    <physiologicalReaction direction="left-to-right" evidence="1">
        <dbReference type="Rhea" id="RHEA:24830"/>
    </physiologicalReaction>
</comment>
<comment type="pathway">
    <text evidence="1">Purine metabolism; IMP biosynthesis via de novo pathway; N(2)-formyl-N(1)-(5-phospho-D-ribosyl)glycinamide from N(1)-(5-phospho-D-ribosyl)glycinamide (formate route): step 1/1.</text>
</comment>
<comment type="subunit">
    <text evidence="1">Homodimer.</text>
</comment>
<comment type="similarity">
    <text evidence="1">Belongs to the PurK/PurT family.</text>
</comment>
<accession>B2VJA4</accession>